<evidence type="ECO:0000255" key="1">
    <source>
        <dbReference type="HAMAP-Rule" id="MF_00023"/>
    </source>
</evidence>
<feature type="chain" id="PRO_1000197605" description="SsrA-binding protein">
    <location>
        <begin position="1"/>
        <end position="155"/>
    </location>
</feature>
<gene>
    <name evidence="1" type="primary">smpB</name>
    <name type="ordered locus">BAMEG_5386</name>
</gene>
<accession>C3LDE9</accession>
<dbReference type="EMBL" id="CP001215">
    <property type="protein sequence ID" value="ACP15811.1"/>
    <property type="molecule type" value="Genomic_DNA"/>
</dbReference>
<dbReference type="RefSeq" id="WP_001123905.1">
    <property type="nucleotide sequence ID" value="NC_012581.1"/>
</dbReference>
<dbReference type="SMR" id="C3LDE9"/>
<dbReference type="GeneID" id="45024939"/>
<dbReference type="KEGG" id="bah:BAMEG_5386"/>
<dbReference type="HOGENOM" id="CLU_108953_0_0_9"/>
<dbReference type="GO" id="GO:0005829">
    <property type="term" value="C:cytosol"/>
    <property type="evidence" value="ECO:0007669"/>
    <property type="project" value="TreeGrafter"/>
</dbReference>
<dbReference type="GO" id="GO:0003723">
    <property type="term" value="F:RNA binding"/>
    <property type="evidence" value="ECO:0007669"/>
    <property type="project" value="UniProtKB-UniRule"/>
</dbReference>
<dbReference type="GO" id="GO:0070929">
    <property type="term" value="P:trans-translation"/>
    <property type="evidence" value="ECO:0007669"/>
    <property type="project" value="UniProtKB-UniRule"/>
</dbReference>
<dbReference type="CDD" id="cd09294">
    <property type="entry name" value="SmpB"/>
    <property type="match status" value="1"/>
</dbReference>
<dbReference type="Gene3D" id="2.40.280.10">
    <property type="match status" value="1"/>
</dbReference>
<dbReference type="HAMAP" id="MF_00023">
    <property type="entry name" value="SmpB"/>
    <property type="match status" value="1"/>
</dbReference>
<dbReference type="InterPro" id="IPR023620">
    <property type="entry name" value="SmpB"/>
</dbReference>
<dbReference type="InterPro" id="IPR000037">
    <property type="entry name" value="SsrA-bd_prot"/>
</dbReference>
<dbReference type="InterPro" id="IPR020081">
    <property type="entry name" value="SsrA-bd_prot_CS"/>
</dbReference>
<dbReference type="NCBIfam" id="NF003843">
    <property type="entry name" value="PRK05422.1"/>
    <property type="match status" value="1"/>
</dbReference>
<dbReference type="NCBIfam" id="TIGR00086">
    <property type="entry name" value="smpB"/>
    <property type="match status" value="1"/>
</dbReference>
<dbReference type="PANTHER" id="PTHR30308:SF2">
    <property type="entry name" value="SSRA-BINDING PROTEIN"/>
    <property type="match status" value="1"/>
</dbReference>
<dbReference type="PANTHER" id="PTHR30308">
    <property type="entry name" value="TMRNA-BINDING COMPONENT OF TRANS-TRANSLATION TAGGING COMPLEX"/>
    <property type="match status" value="1"/>
</dbReference>
<dbReference type="Pfam" id="PF01668">
    <property type="entry name" value="SmpB"/>
    <property type="match status" value="1"/>
</dbReference>
<dbReference type="SUPFAM" id="SSF74982">
    <property type="entry name" value="Small protein B (SmpB)"/>
    <property type="match status" value="1"/>
</dbReference>
<dbReference type="PROSITE" id="PS01317">
    <property type="entry name" value="SSRP"/>
    <property type="match status" value="1"/>
</dbReference>
<proteinExistence type="inferred from homology"/>
<organism>
    <name type="scientific">Bacillus anthracis (strain CDC 684 / NRRL 3495)</name>
    <dbReference type="NCBI Taxonomy" id="568206"/>
    <lineage>
        <taxon>Bacteria</taxon>
        <taxon>Bacillati</taxon>
        <taxon>Bacillota</taxon>
        <taxon>Bacilli</taxon>
        <taxon>Bacillales</taxon>
        <taxon>Bacillaceae</taxon>
        <taxon>Bacillus</taxon>
        <taxon>Bacillus cereus group</taxon>
    </lineage>
</organism>
<reference key="1">
    <citation type="submission" date="2008-10" db="EMBL/GenBank/DDBJ databases">
        <title>Genome sequence of Bacillus anthracis str. CDC 684.</title>
        <authorList>
            <person name="Dodson R.J."/>
            <person name="Munk A.C."/>
            <person name="Brettin T."/>
            <person name="Bruce D."/>
            <person name="Detter C."/>
            <person name="Tapia R."/>
            <person name="Han C."/>
            <person name="Sutton G."/>
            <person name="Sims D."/>
        </authorList>
    </citation>
    <scope>NUCLEOTIDE SEQUENCE [LARGE SCALE GENOMIC DNA]</scope>
    <source>
        <strain>CDC 684 / NRRL 3495</strain>
    </source>
</reference>
<name>SSRP_BACAC</name>
<sequence>MPKGSGKVIAQNKKAFHDYFIEETYEAGLVLQGTEIKSIRAGRVNLKDAFARVHNGEVWVHNMHISTYEQGNRFNHDPLRTRKLLLHKKEIEKLAGASKETGYALVPVRIYLKNGFAKMALGLAKGKKQYDKRHDLKEKEAKREIARAFRDRQKM</sequence>
<comment type="function">
    <text evidence="1">Required for rescue of stalled ribosomes mediated by trans-translation. Binds to transfer-messenger RNA (tmRNA), required for stable association of tmRNA with ribosomes. tmRNA and SmpB together mimic tRNA shape, replacing the anticodon stem-loop with SmpB. tmRNA is encoded by the ssrA gene; the 2 termini fold to resemble tRNA(Ala) and it encodes a 'tag peptide', a short internal open reading frame. During trans-translation Ala-aminoacylated tmRNA acts like a tRNA, entering the A-site of stalled ribosomes, displacing the stalled mRNA. The ribosome then switches to translate the ORF on the tmRNA; the nascent peptide is terminated with the 'tag peptide' encoded by the tmRNA and targeted for degradation. The ribosome is freed to recommence translation, which seems to be the essential function of trans-translation.</text>
</comment>
<comment type="subcellular location">
    <subcellularLocation>
        <location evidence="1">Cytoplasm</location>
    </subcellularLocation>
    <text evidence="1">The tmRNA-SmpB complex associates with stalled 70S ribosomes.</text>
</comment>
<comment type="similarity">
    <text evidence="1">Belongs to the SmpB family.</text>
</comment>
<keyword id="KW-0963">Cytoplasm</keyword>
<keyword id="KW-0694">RNA-binding</keyword>
<protein>
    <recommendedName>
        <fullName evidence="1">SsrA-binding protein</fullName>
    </recommendedName>
    <alternativeName>
        <fullName evidence="1">Small protein B</fullName>
    </alternativeName>
</protein>